<organism>
    <name type="scientific">Drosophila melanogaster</name>
    <name type="common">Fruit fly</name>
    <dbReference type="NCBI Taxonomy" id="7227"/>
    <lineage>
        <taxon>Eukaryota</taxon>
        <taxon>Metazoa</taxon>
        <taxon>Ecdysozoa</taxon>
        <taxon>Arthropoda</taxon>
        <taxon>Hexapoda</taxon>
        <taxon>Insecta</taxon>
        <taxon>Pterygota</taxon>
        <taxon>Neoptera</taxon>
        <taxon>Endopterygota</taxon>
        <taxon>Diptera</taxon>
        <taxon>Brachycera</taxon>
        <taxon>Muscomorpha</taxon>
        <taxon>Ephydroidea</taxon>
        <taxon>Drosophilidae</taxon>
        <taxon>Drosophila</taxon>
        <taxon>Sophophora</taxon>
    </lineage>
</organism>
<dbReference type="EMBL" id="X55887">
    <property type="protein sequence ID" value="CAA39373.1"/>
    <property type="molecule type" value="Genomic_DNA"/>
</dbReference>
<dbReference type="EMBL" id="AE014297">
    <property type="protein sequence ID" value="AAF56539.1"/>
    <property type="molecule type" value="Genomic_DNA"/>
</dbReference>
<dbReference type="RefSeq" id="NP_542440.1">
    <property type="nucleotide sequence ID" value="NM_080709.3"/>
</dbReference>
<dbReference type="PDB" id="9BFQ">
    <property type="method" value="EM"/>
    <property type="resolution" value="3.09 A"/>
    <property type="chains" value="B=32-530"/>
</dbReference>
<dbReference type="PDB" id="9BFR">
    <property type="method" value="EM"/>
    <property type="resolution" value="3.19 A"/>
    <property type="chains" value="A/B=32-530"/>
</dbReference>
<dbReference type="PDBsum" id="9BFQ"/>
<dbReference type="PDBsum" id="9BFR"/>
<dbReference type="EMDB" id="EMD-44503"/>
<dbReference type="EMDB" id="EMD-44504"/>
<dbReference type="SMR" id="P22815"/>
<dbReference type="BioGRID" id="68046">
    <property type="interactions" value="7"/>
</dbReference>
<dbReference type="FunCoup" id="P22815">
    <property type="interactions" value="94"/>
</dbReference>
<dbReference type="IntAct" id="P22815">
    <property type="interactions" value="1"/>
</dbReference>
<dbReference type="STRING" id="7227.FBpp0084323"/>
<dbReference type="GlyCosmos" id="P22815">
    <property type="glycosylation" value="4 sites, No reported glycans"/>
</dbReference>
<dbReference type="GlyGen" id="P22815">
    <property type="glycosylation" value="4 sites"/>
</dbReference>
<dbReference type="PaxDb" id="7227-FBpp0084323"/>
<dbReference type="DNASU" id="43146"/>
<dbReference type="EnsemblMetazoa" id="FBtr0084949">
    <property type="protein sequence ID" value="FBpp0084323"/>
    <property type="gene ID" value="FBgn0000206"/>
</dbReference>
<dbReference type="GeneID" id="43146"/>
<dbReference type="KEGG" id="dme:Dmel_CG8285"/>
<dbReference type="AGR" id="FB:FBgn0000206"/>
<dbReference type="CTD" id="43146"/>
<dbReference type="FlyBase" id="FBgn0000206">
    <property type="gene designation" value="boss"/>
</dbReference>
<dbReference type="VEuPathDB" id="VectorBase:FBgn0000206"/>
<dbReference type="eggNOG" id="KOG1056">
    <property type="taxonomic scope" value="Eukaryota"/>
</dbReference>
<dbReference type="HOGENOM" id="CLU_010513_1_0_1"/>
<dbReference type="InParanoid" id="P22815"/>
<dbReference type="OMA" id="CTQYSMG"/>
<dbReference type="OrthoDB" id="9880600at2759"/>
<dbReference type="PhylomeDB" id="P22815"/>
<dbReference type="SignaLink" id="P22815"/>
<dbReference type="BioGRID-ORCS" id="43146">
    <property type="hits" value="0 hits in 3 CRISPR screens"/>
</dbReference>
<dbReference type="GenomeRNAi" id="43146"/>
<dbReference type="PRO" id="PR:P22815"/>
<dbReference type="Proteomes" id="UP000000803">
    <property type="component" value="Chromosome 3R"/>
</dbReference>
<dbReference type="Bgee" id="FBgn0000206">
    <property type="expression patterns" value="Expressed in outer photoreceptor cell (Drosophila) in insect head and 22 other cell types or tissues"/>
</dbReference>
<dbReference type="ExpressionAtlas" id="P22815">
    <property type="expression patterns" value="baseline and differential"/>
</dbReference>
<dbReference type="GO" id="GO:0005886">
    <property type="term" value="C:plasma membrane"/>
    <property type="evidence" value="ECO:0000314"/>
    <property type="project" value="FlyBase"/>
</dbReference>
<dbReference type="GO" id="GO:0035997">
    <property type="term" value="C:rhabdomere microvillus membrane"/>
    <property type="evidence" value="ECO:0000314"/>
    <property type="project" value="FlyBase"/>
</dbReference>
<dbReference type="GO" id="GO:0001640">
    <property type="term" value="F:adenylate cyclase inhibiting G protein-coupled glutamate receptor activity"/>
    <property type="evidence" value="ECO:0000318"/>
    <property type="project" value="GO_Central"/>
</dbReference>
<dbReference type="GO" id="GO:0048018">
    <property type="term" value="F:receptor ligand activity"/>
    <property type="evidence" value="ECO:0000314"/>
    <property type="project" value="FlyBase"/>
</dbReference>
<dbReference type="GO" id="GO:0005118">
    <property type="term" value="F:sevenless binding"/>
    <property type="evidence" value="ECO:0000314"/>
    <property type="project" value="FlyBase"/>
</dbReference>
<dbReference type="GO" id="GO:0060250">
    <property type="term" value="P:germ-line stem-cell niche homeostasis"/>
    <property type="evidence" value="ECO:0000315"/>
    <property type="project" value="FlyBase"/>
</dbReference>
<dbReference type="GO" id="GO:0042593">
    <property type="term" value="P:glucose homeostasis"/>
    <property type="evidence" value="ECO:0000315"/>
    <property type="project" value="FlyBase"/>
</dbReference>
<dbReference type="GO" id="GO:0055088">
    <property type="term" value="P:lipid homeostasis"/>
    <property type="evidence" value="ECO:0000315"/>
    <property type="project" value="FlyBase"/>
</dbReference>
<dbReference type="GO" id="GO:0007465">
    <property type="term" value="P:R7 cell fate commitment"/>
    <property type="evidence" value="ECO:0000315"/>
    <property type="project" value="FlyBase"/>
</dbReference>
<dbReference type="GO" id="GO:0045470">
    <property type="term" value="P:R8 cell-mediated photoreceptor organization"/>
    <property type="evidence" value="ECO:0000315"/>
    <property type="project" value="FlyBase"/>
</dbReference>
<dbReference type="GO" id="GO:0009749">
    <property type="term" value="P:response to glucose"/>
    <property type="evidence" value="ECO:0000315"/>
    <property type="project" value="FlyBase"/>
</dbReference>
<dbReference type="GO" id="GO:0045500">
    <property type="term" value="P:sevenless signaling pathway"/>
    <property type="evidence" value="ECO:0000314"/>
    <property type="project" value="FlyBase"/>
</dbReference>
<dbReference type="GO" id="GO:0007601">
    <property type="term" value="P:visual perception"/>
    <property type="evidence" value="ECO:0007669"/>
    <property type="project" value="UniProtKB-KW"/>
</dbReference>
<dbReference type="CDD" id="cd15042">
    <property type="entry name" value="7tmC_Boss"/>
    <property type="match status" value="1"/>
</dbReference>
<dbReference type="InterPro" id="IPR002956">
    <property type="entry name" value="Bride_of_7less"/>
</dbReference>
<dbReference type="InterPro" id="IPR017978">
    <property type="entry name" value="GPCR_3_C"/>
</dbReference>
<dbReference type="InterPro" id="IPR050726">
    <property type="entry name" value="mGluR"/>
</dbReference>
<dbReference type="PANTHER" id="PTHR24060">
    <property type="entry name" value="METABOTROPIC GLUTAMATE RECEPTOR"/>
    <property type="match status" value="1"/>
</dbReference>
<dbReference type="Pfam" id="PF00003">
    <property type="entry name" value="7tm_3"/>
    <property type="match status" value="1"/>
</dbReference>
<dbReference type="PRINTS" id="PR01223">
    <property type="entry name" value="BRIDEOF7LESS"/>
</dbReference>
<protein>
    <recommendedName>
        <fullName>Protein bride of sevenless</fullName>
    </recommendedName>
</protein>
<gene>
    <name type="primary">boss</name>
    <name type="ORF">CG8285</name>
</gene>
<comment type="function">
    <text evidence="3">Acts as a ligand for sevenless tyrosine-kinase receptor during eye development.</text>
</comment>
<comment type="subcellular location">
    <subcellularLocation>
        <location evidence="5">Cell membrane</location>
        <topology evidence="5">Multi-pass membrane protein</topology>
    </subcellularLocation>
</comment>
<comment type="tissue specificity">
    <text>Expressed exclusively by R8 photoreceptor cells and is internalized in a sev-dependent manner by R7 cells.</text>
</comment>
<comment type="developmental stage">
    <text evidence="4">Expressed in R8 photoreceptor cells of the developing larval ommatidium (at protein level).</text>
</comment>
<comment type="similarity">
    <text evidence="5">Belongs to the G-protein coupled receptor 3 family.</text>
</comment>
<proteinExistence type="evidence at protein level"/>
<sequence>MKVMDALQSGRRKPLPVALLCILVTVFCVLECHGADLTSPTKKSAPLRITKPQPTSQQAKPISITTRAPTTVASTTDDEVSSSVDGQLAPLISSTTEGPSSGTTASLVPEICLNGLQLTVNSADEGTVIRKQEEFVKILEGDVVLSVLTKDPDSALFVINRVNQANLIMADFEIGIRAISIDNASLAENLLIQEVQFLQQCTTYSMGIFVDWELYKQLESVIKDLEYNIWPIPGTRAHLFPKVAHLLHQMPWGEKIASVEIATETLEMYNEFMEAARQEHMCLMHFKSDDNVYIMFGNKLASHFKENGTLFSVPTDRTDDEFLADLPNRAFVLMENEIDLSTAVELDATPTALDEILIGKSVLPSRVLSFAGSIIDLMNWLRGSLSKHCKRGEEHDLYVLESCFNFLNFIEDWRTSEYRQAHDTAEILSLLLMRKLGTAMNFQMYQKKVLTLDKITGESRTELREIASQNFVTNVTTYYHYNRDNHTSLELKTKFGQVFNCQYSAGDNRRYPFLFDGESVMFWRIKMDTWVATGLTAAILGLIATLAILVFIVVRISLGDVFEGNPTTSILLLLSLILVFCSFVPYSIEYVGEQRNSHVTFEDAQTLNTLCAVRVFIMTLVYCFVFSLLLCRAVMLASIGSEGGFLSHVNGYIQAVICAFSVVAQVGMSVQLLVVMHVASETVSCENIYYGRWLWGLLAYDFALLCCVGALIPSIYRSQRNYREGILIVIGSVLIMVIWVAWIALSLFGDEWRDAAIPLGLQASGWAVLVGILIPRTFLIVRGIERSDIAQALPSLTSLAFAQNNQYSSEQSVYECVNPAMRHCSQDEVNHQSPSEIPTLPLRGGGPRRQQFFANLRQANANINPQRPPPRPQQSPSRSSVSSLPPSPDHNKITRF</sequence>
<name>BOSS_DROME</name>
<reference key="1">
    <citation type="journal article" date="1990" name="Genes Dev.">
        <title>Induction of cell fate in the Drosophila retina: the bride of sevenless protein is predicted to contain a large extracellular domain and seven transmembrane segments.</title>
        <authorList>
            <person name="Hart A.C."/>
            <person name="Kraemer H."/>
            <person name="van Vactor D.L. Jr."/>
            <person name="Paidhungat M."/>
            <person name="Zipursky S.L."/>
        </authorList>
    </citation>
    <scope>NUCLEOTIDE SEQUENCE [GENOMIC DNA]</scope>
</reference>
<reference key="2">
    <citation type="submission" date="1997-02" db="EMBL/GenBank/DDBJ databases">
        <authorList>
            <person name="Kraemer H."/>
        </authorList>
    </citation>
    <scope>SEQUENCE REVISION</scope>
</reference>
<reference key="3">
    <citation type="journal article" date="2000" name="Science">
        <title>The genome sequence of Drosophila melanogaster.</title>
        <authorList>
            <person name="Adams M.D."/>
            <person name="Celniker S.E."/>
            <person name="Holt R.A."/>
            <person name="Evans C.A."/>
            <person name="Gocayne J.D."/>
            <person name="Amanatides P.G."/>
            <person name="Scherer S.E."/>
            <person name="Li P.W."/>
            <person name="Hoskins R.A."/>
            <person name="Galle R.F."/>
            <person name="George R.A."/>
            <person name="Lewis S.E."/>
            <person name="Richards S."/>
            <person name="Ashburner M."/>
            <person name="Henderson S.N."/>
            <person name="Sutton G.G."/>
            <person name="Wortman J.R."/>
            <person name="Yandell M.D."/>
            <person name="Zhang Q."/>
            <person name="Chen L.X."/>
            <person name="Brandon R.C."/>
            <person name="Rogers Y.-H.C."/>
            <person name="Blazej R.G."/>
            <person name="Champe M."/>
            <person name="Pfeiffer B.D."/>
            <person name="Wan K.H."/>
            <person name="Doyle C."/>
            <person name="Baxter E.G."/>
            <person name="Helt G."/>
            <person name="Nelson C.R."/>
            <person name="Miklos G.L.G."/>
            <person name="Abril J.F."/>
            <person name="Agbayani A."/>
            <person name="An H.-J."/>
            <person name="Andrews-Pfannkoch C."/>
            <person name="Baldwin D."/>
            <person name="Ballew R.M."/>
            <person name="Basu A."/>
            <person name="Baxendale J."/>
            <person name="Bayraktaroglu L."/>
            <person name="Beasley E.M."/>
            <person name="Beeson K.Y."/>
            <person name="Benos P.V."/>
            <person name="Berman B.P."/>
            <person name="Bhandari D."/>
            <person name="Bolshakov S."/>
            <person name="Borkova D."/>
            <person name="Botchan M.R."/>
            <person name="Bouck J."/>
            <person name="Brokstein P."/>
            <person name="Brottier P."/>
            <person name="Burtis K.C."/>
            <person name="Busam D.A."/>
            <person name="Butler H."/>
            <person name="Cadieu E."/>
            <person name="Center A."/>
            <person name="Chandra I."/>
            <person name="Cherry J.M."/>
            <person name="Cawley S."/>
            <person name="Dahlke C."/>
            <person name="Davenport L.B."/>
            <person name="Davies P."/>
            <person name="de Pablos B."/>
            <person name="Delcher A."/>
            <person name="Deng Z."/>
            <person name="Mays A.D."/>
            <person name="Dew I."/>
            <person name="Dietz S.M."/>
            <person name="Dodson K."/>
            <person name="Doup L.E."/>
            <person name="Downes M."/>
            <person name="Dugan-Rocha S."/>
            <person name="Dunkov B.C."/>
            <person name="Dunn P."/>
            <person name="Durbin K.J."/>
            <person name="Evangelista C.C."/>
            <person name="Ferraz C."/>
            <person name="Ferriera S."/>
            <person name="Fleischmann W."/>
            <person name="Fosler C."/>
            <person name="Gabrielian A.E."/>
            <person name="Garg N.S."/>
            <person name="Gelbart W.M."/>
            <person name="Glasser K."/>
            <person name="Glodek A."/>
            <person name="Gong F."/>
            <person name="Gorrell J.H."/>
            <person name="Gu Z."/>
            <person name="Guan P."/>
            <person name="Harris M."/>
            <person name="Harris N.L."/>
            <person name="Harvey D.A."/>
            <person name="Heiman T.J."/>
            <person name="Hernandez J.R."/>
            <person name="Houck J."/>
            <person name="Hostin D."/>
            <person name="Houston K.A."/>
            <person name="Howland T.J."/>
            <person name="Wei M.-H."/>
            <person name="Ibegwam C."/>
            <person name="Jalali M."/>
            <person name="Kalush F."/>
            <person name="Karpen G.H."/>
            <person name="Ke Z."/>
            <person name="Kennison J.A."/>
            <person name="Ketchum K.A."/>
            <person name="Kimmel B.E."/>
            <person name="Kodira C.D."/>
            <person name="Kraft C.L."/>
            <person name="Kravitz S."/>
            <person name="Kulp D."/>
            <person name="Lai Z."/>
            <person name="Lasko P."/>
            <person name="Lei Y."/>
            <person name="Levitsky A.A."/>
            <person name="Li J.H."/>
            <person name="Li Z."/>
            <person name="Liang Y."/>
            <person name="Lin X."/>
            <person name="Liu X."/>
            <person name="Mattei B."/>
            <person name="McIntosh T.C."/>
            <person name="McLeod M.P."/>
            <person name="McPherson D."/>
            <person name="Merkulov G."/>
            <person name="Milshina N.V."/>
            <person name="Mobarry C."/>
            <person name="Morris J."/>
            <person name="Moshrefi A."/>
            <person name="Mount S.M."/>
            <person name="Moy M."/>
            <person name="Murphy B."/>
            <person name="Murphy L."/>
            <person name="Muzny D.M."/>
            <person name="Nelson D.L."/>
            <person name="Nelson D.R."/>
            <person name="Nelson K.A."/>
            <person name="Nixon K."/>
            <person name="Nusskern D.R."/>
            <person name="Pacleb J.M."/>
            <person name="Palazzolo M."/>
            <person name="Pittman G.S."/>
            <person name="Pan S."/>
            <person name="Pollard J."/>
            <person name="Puri V."/>
            <person name="Reese M.G."/>
            <person name="Reinert K."/>
            <person name="Remington K."/>
            <person name="Saunders R.D.C."/>
            <person name="Scheeler F."/>
            <person name="Shen H."/>
            <person name="Shue B.C."/>
            <person name="Siden-Kiamos I."/>
            <person name="Simpson M."/>
            <person name="Skupski M.P."/>
            <person name="Smith T.J."/>
            <person name="Spier E."/>
            <person name="Spradling A.C."/>
            <person name="Stapleton M."/>
            <person name="Strong R."/>
            <person name="Sun E."/>
            <person name="Svirskas R."/>
            <person name="Tector C."/>
            <person name="Turner R."/>
            <person name="Venter E."/>
            <person name="Wang A.H."/>
            <person name="Wang X."/>
            <person name="Wang Z.-Y."/>
            <person name="Wassarman D.A."/>
            <person name="Weinstock G.M."/>
            <person name="Weissenbach J."/>
            <person name="Williams S.M."/>
            <person name="Woodage T."/>
            <person name="Worley K.C."/>
            <person name="Wu D."/>
            <person name="Yang S."/>
            <person name="Yao Q.A."/>
            <person name="Ye J."/>
            <person name="Yeh R.-F."/>
            <person name="Zaveri J.S."/>
            <person name="Zhan M."/>
            <person name="Zhang G."/>
            <person name="Zhao Q."/>
            <person name="Zheng L."/>
            <person name="Zheng X.H."/>
            <person name="Zhong F.N."/>
            <person name="Zhong W."/>
            <person name="Zhou X."/>
            <person name="Zhu S.C."/>
            <person name="Zhu X."/>
            <person name="Smith H.O."/>
            <person name="Gibbs R.A."/>
            <person name="Myers E.W."/>
            <person name="Rubin G.M."/>
            <person name="Venter J.C."/>
        </authorList>
    </citation>
    <scope>NUCLEOTIDE SEQUENCE [LARGE SCALE GENOMIC DNA]</scope>
    <source>
        <strain>Berkeley</strain>
    </source>
</reference>
<reference key="4">
    <citation type="journal article" date="2002" name="Genome Biol.">
        <title>Annotation of the Drosophila melanogaster euchromatic genome: a systematic review.</title>
        <authorList>
            <person name="Misra S."/>
            <person name="Crosby M.A."/>
            <person name="Mungall C.J."/>
            <person name="Matthews B.B."/>
            <person name="Campbell K.S."/>
            <person name="Hradecky P."/>
            <person name="Huang Y."/>
            <person name="Kaminker J.S."/>
            <person name="Millburn G.H."/>
            <person name="Prochnik S.E."/>
            <person name="Smith C.D."/>
            <person name="Tupy J.L."/>
            <person name="Whitfield E.J."/>
            <person name="Bayraktaroglu L."/>
            <person name="Berman B.P."/>
            <person name="Bettencourt B.R."/>
            <person name="Celniker S.E."/>
            <person name="de Grey A.D.N.J."/>
            <person name="Drysdale R.A."/>
            <person name="Harris N.L."/>
            <person name="Richter J."/>
            <person name="Russo S."/>
            <person name="Schroeder A.J."/>
            <person name="Shu S.Q."/>
            <person name="Stapleton M."/>
            <person name="Yamada C."/>
            <person name="Ashburner M."/>
            <person name="Gelbart W.M."/>
            <person name="Rubin G.M."/>
            <person name="Lewis S.E."/>
        </authorList>
    </citation>
    <scope>GENOME REANNOTATION</scope>
    <source>
        <strain>Berkeley</strain>
    </source>
</reference>
<reference key="5">
    <citation type="journal article" date="1991" name="Nature">
        <title>Interaction of bride of sevenless membrane-bound ligand and the sevenless tyrosine-kinase receptor.</title>
        <authorList>
            <person name="Kraemer H."/>
            <person name="Cagan R.L."/>
            <person name="Zipursky S.L."/>
        </authorList>
    </citation>
    <scope>FUNCTION</scope>
</reference>
<reference key="6">
    <citation type="journal article" date="2014" name="Mol. Biol. Cell">
        <title>Interaction of the HOPS complex with Syntaxin 17 mediates autophagosome clearance in Drosophila.</title>
        <authorList>
            <person name="Takats S."/>
            <person name="Pircs K."/>
            <person name="Nagy P."/>
            <person name="Varga A."/>
            <person name="Karpati M."/>
            <person name="Hegedus K."/>
            <person name="Kramer H."/>
            <person name="Kovacs A.L."/>
            <person name="Sass M."/>
            <person name="Juhasz G."/>
        </authorList>
    </citation>
    <scope>DEVELOPMENTAL STAGE</scope>
</reference>
<evidence type="ECO:0000255" key="1"/>
<evidence type="ECO:0000256" key="2">
    <source>
        <dbReference type="SAM" id="MobiDB-lite"/>
    </source>
</evidence>
<evidence type="ECO:0000269" key="3">
    <source>
    </source>
</evidence>
<evidence type="ECO:0000269" key="4">
    <source>
    </source>
</evidence>
<evidence type="ECO:0000305" key="5"/>
<accession>P22815</accession>
<accession>Q9VBJ5</accession>
<keyword id="KW-0002">3D-structure</keyword>
<keyword id="KW-1003">Cell membrane</keyword>
<keyword id="KW-0297">G-protein coupled receptor</keyword>
<keyword id="KW-0325">Glycoprotein</keyword>
<keyword id="KW-0472">Membrane</keyword>
<keyword id="KW-0675">Receptor</keyword>
<keyword id="KW-1185">Reference proteome</keyword>
<keyword id="KW-0716">Sensory transduction</keyword>
<keyword id="KW-0732">Signal</keyword>
<keyword id="KW-0807">Transducer</keyword>
<keyword id="KW-0812">Transmembrane</keyword>
<keyword id="KW-1133">Transmembrane helix</keyword>
<keyword id="KW-0844">Vision</keyword>
<feature type="signal peptide" evidence="1">
    <location>
        <begin position="1"/>
        <end position="31"/>
    </location>
</feature>
<feature type="chain" id="PRO_0000012971" description="Protein bride of sevenless">
    <location>
        <begin position="32"/>
        <end position="896"/>
    </location>
</feature>
<feature type="topological domain" description="Extracellular" evidence="1">
    <location>
        <begin position="32"/>
        <end position="530"/>
    </location>
</feature>
<feature type="transmembrane region" description="Helical" evidence="1">
    <location>
        <begin position="531"/>
        <end position="554"/>
    </location>
</feature>
<feature type="transmembrane region" description="Helical" evidence="1">
    <location>
        <begin position="570"/>
        <end position="588"/>
    </location>
</feature>
<feature type="transmembrane region" description="Helical" evidence="1">
    <location>
        <begin position="615"/>
        <end position="637"/>
    </location>
</feature>
<feature type="transmembrane region" description="Helical" evidence="1">
    <location>
        <begin position="655"/>
        <end position="676"/>
    </location>
</feature>
<feature type="transmembrane region" description="Helical" evidence="1">
    <location>
        <begin position="693"/>
        <end position="712"/>
    </location>
</feature>
<feature type="transmembrane region" description="Helical" evidence="1">
    <location>
        <begin position="728"/>
        <end position="748"/>
    </location>
</feature>
<feature type="transmembrane region" description="Helical" evidence="1">
    <location>
        <begin position="759"/>
        <end position="781"/>
    </location>
</feature>
<feature type="topological domain" description="Cytoplasmic" evidence="1">
    <location>
        <begin position="782"/>
        <end position="896"/>
    </location>
</feature>
<feature type="region of interest" description="Disordered" evidence="2">
    <location>
        <begin position="38"/>
        <end position="84"/>
    </location>
</feature>
<feature type="region of interest" description="Disordered" evidence="2">
    <location>
        <begin position="825"/>
        <end position="844"/>
    </location>
</feature>
<feature type="region of interest" description="Disordered" evidence="2">
    <location>
        <begin position="861"/>
        <end position="896"/>
    </location>
</feature>
<feature type="compositionally biased region" description="Polar residues" evidence="2">
    <location>
        <begin position="52"/>
        <end position="64"/>
    </location>
</feature>
<feature type="compositionally biased region" description="Low complexity" evidence="2">
    <location>
        <begin position="65"/>
        <end position="84"/>
    </location>
</feature>
<feature type="compositionally biased region" description="Low complexity" evidence="2">
    <location>
        <begin position="874"/>
        <end position="884"/>
    </location>
</feature>
<feature type="glycosylation site" description="N-linked (GlcNAc...) asparagine" evidence="1">
    <location>
        <position position="183"/>
    </location>
</feature>
<feature type="glycosylation site" description="N-linked (GlcNAc...) asparagine" evidence="1">
    <location>
        <position position="307"/>
    </location>
</feature>
<feature type="glycosylation site" description="N-linked (GlcNAc...) asparagine" evidence="1">
    <location>
        <position position="474"/>
    </location>
</feature>
<feature type="glycosylation site" description="N-linked (GlcNAc...) asparagine" evidence="1">
    <location>
        <position position="485"/>
    </location>
</feature>